<feature type="chain" id="PRO_0000169901" description="Galactose-1-phosphate uridylyltransferase">
    <location>
        <begin position="1"/>
        <end position="389" status="greater than"/>
    </location>
</feature>
<feature type="non-terminal residue">
    <location>
        <position position="389"/>
    </location>
</feature>
<dbReference type="EC" id="2.7.7.12"/>
<dbReference type="EMBL" id="M55537">
    <property type="protein sequence ID" value="AAA63611.1"/>
    <property type="molecule type" value="Genomic_DNA"/>
</dbReference>
<dbReference type="PIR" id="C49776">
    <property type="entry name" value="C49776"/>
</dbReference>
<dbReference type="UniPathway" id="UPA00214"/>
<dbReference type="GO" id="GO:0005737">
    <property type="term" value="C:cytoplasm"/>
    <property type="evidence" value="ECO:0007669"/>
    <property type="project" value="UniProtKB-SubCell"/>
</dbReference>
<dbReference type="GO" id="GO:0008108">
    <property type="term" value="F:UDP-glucose:hexose-1-phosphate uridylyltransferase activity"/>
    <property type="evidence" value="ECO:0007669"/>
    <property type="project" value="UniProtKB-EC"/>
</dbReference>
<dbReference type="GO" id="GO:0006012">
    <property type="term" value="P:galactose metabolic process"/>
    <property type="evidence" value="ECO:0007669"/>
    <property type="project" value="UniProtKB-UniPathway"/>
</dbReference>
<dbReference type="HAMAP" id="MF_00571">
    <property type="entry name" value="GalP_UDP_trans"/>
    <property type="match status" value="1"/>
</dbReference>
<dbReference type="InterPro" id="IPR000766">
    <property type="entry name" value="GalP_uridyl_Trfase_II"/>
</dbReference>
<dbReference type="InterPro" id="IPR023425">
    <property type="entry name" value="GalP_uridyl_Trfase_II_CS"/>
</dbReference>
<dbReference type="InterPro" id="IPR005850">
    <property type="entry name" value="GalP_Utransf_C"/>
</dbReference>
<dbReference type="InterPro" id="IPR005849">
    <property type="entry name" value="GalP_Utransf_N"/>
</dbReference>
<dbReference type="PANTHER" id="PTHR39191:SF1">
    <property type="entry name" value="DUF4922 DOMAIN-CONTAINING PROTEIN"/>
    <property type="match status" value="1"/>
</dbReference>
<dbReference type="PANTHER" id="PTHR39191">
    <property type="entry name" value="GALACTOSE-1-PHOSPHATE URIDYLYLTRANSFERASE"/>
    <property type="match status" value="1"/>
</dbReference>
<dbReference type="Pfam" id="PF02744">
    <property type="entry name" value="GalP_UDP_tr_C"/>
    <property type="match status" value="1"/>
</dbReference>
<dbReference type="Pfam" id="PF01087">
    <property type="entry name" value="GalP_UDP_transf"/>
    <property type="match status" value="1"/>
</dbReference>
<dbReference type="PROSITE" id="PS01163">
    <property type="entry name" value="GAL_P_UDP_TRANSF_II"/>
    <property type="match status" value="1"/>
</dbReference>
<sequence length="389" mass="45002">MLQESIKKLVQYGIDMGLTPECERIYTTNLLLECMKEDEYIDPDCDLSNIILEDVLKELLDEAVNRGIIEDSVTHRDLFDTKLMNQLCPRPKQVIDDFNRIYDNHGPIAATDYFYKLSKASDYIRTYRVKKDLKWTCDTEYGTLDITINLSKPEKDPKAIAAAKNAKQSTYPKCQLCMENEGYAGRINHPARENHRIIPITINNSNWGFQYSPYVYYNEHCIVFNGEHTPMKIERATFVKLFDFIKLFPHYFLGSNADLPIVGGSILSHDHFQGGHYTFAMEKAPIIQEFTVKGYEDVKAGIVKWPLSVIRLQCKDETRLIDLATNILDKWRNYTDEEAYIFAETDGEPHNTITPIARKRGDYFELDPLESTCRHASLALAVVLQRRDW</sequence>
<organism>
    <name type="scientific">Butyrivibrio fibrisolvens</name>
    <dbReference type="NCBI Taxonomy" id="831"/>
    <lineage>
        <taxon>Bacteria</taxon>
        <taxon>Bacillati</taxon>
        <taxon>Bacillota</taxon>
        <taxon>Clostridia</taxon>
        <taxon>Lachnospirales</taxon>
        <taxon>Lachnospiraceae</taxon>
        <taxon>Butyrivibrio</taxon>
    </lineage>
</organism>
<comment type="catalytic activity">
    <reaction>
        <text>alpha-D-galactose 1-phosphate + UDP-alpha-D-glucose = alpha-D-glucose 1-phosphate + UDP-alpha-D-galactose</text>
        <dbReference type="Rhea" id="RHEA:13989"/>
        <dbReference type="ChEBI" id="CHEBI:58336"/>
        <dbReference type="ChEBI" id="CHEBI:58601"/>
        <dbReference type="ChEBI" id="CHEBI:58885"/>
        <dbReference type="ChEBI" id="CHEBI:66914"/>
        <dbReference type="EC" id="2.7.7.12"/>
    </reaction>
</comment>
<comment type="pathway">
    <text>Carbohydrate metabolism; galactose metabolism.</text>
</comment>
<comment type="subcellular location">
    <subcellularLocation>
        <location evidence="1">Cytoplasm</location>
    </subcellularLocation>
</comment>
<comment type="similarity">
    <text evidence="1">Belongs to the galactose-1-phosphate uridylyltransferase type 2 family.</text>
</comment>
<reference key="1">
    <citation type="journal article" date="1991" name="Appl. Environ. Microbiol.">
        <title>Sequencing and expression of the Butyrivibrio fibrisolvens xylB gene encoding a novel bifunctional protein with beta-D-xylosidase and alpha-L-arabinofuranosidase activities.</title>
        <authorList>
            <person name="Utt E.A."/>
            <person name="Eddy C.K."/>
            <person name="Keshav K.F."/>
            <person name="Ingram L.O."/>
        </authorList>
    </citation>
    <scope>NUCLEOTIDE SEQUENCE [GENOMIC DNA]</scope>
</reference>
<evidence type="ECO:0000305" key="1"/>
<name>GALT_BUTFI</name>
<accession>P45981</accession>
<protein>
    <recommendedName>
        <fullName>Galactose-1-phosphate uridylyltransferase</fullName>
        <shortName>Gal-1-P uridylyltransferase</shortName>
        <ecNumber>2.7.7.12</ecNumber>
    </recommendedName>
    <alternativeName>
        <fullName>UDP-glucose--hexose-1-phosphate uridylyltransferase</fullName>
    </alternativeName>
</protein>
<keyword id="KW-0119">Carbohydrate metabolism</keyword>
<keyword id="KW-0963">Cytoplasm</keyword>
<keyword id="KW-0299">Galactose metabolism</keyword>
<keyword id="KW-0548">Nucleotidyltransferase</keyword>
<keyword id="KW-0808">Transferase</keyword>
<gene>
    <name type="primary">galT</name>
</gene>
<proteinExistence type="inferred from homology"/>